<keyword id="KW-0012">Acyltransferase</keyword>
<keyword id="KW-0028">Amino-acid biosynthesis</keyword>
<keyword id="KW-0963">Cytoplasm</keyword>
<keyword id="KW-0486">Methionine biosynthesis</keyword>
<keyword id="KW-1185">Reference proteome</keyword>
<keyword id="KW-0808">Transferase</keyword>
<comment type="function">
    <text evidence="1">Transfers an acetyl group from acetyl-CoA to L-homoserine, forming acetyl-L-homoserine.</text>
</comment>
<comment type="catalytic activity">
    <reaction evidence="1">
        <text>L-homoserine + acetyl-CoA = O-acetyl-L-homoserine + CoA</text>
        <dbReference type="Rhea" id="RHEA:13701"/>
        <dbReference type="ChEBI" id="CHEBI:57287"/>
        <dbReference type="ChEBI" id="CHEBI:57288"/>
        <dbReference type="ChEBI" id="CHEBI:57476"/>
        <dbReference type="ChEBI" id="CHEBI:57716"/>
        <dbReference type="EC" id="2.3.1.31"/>
    </reaction>
</comment>
<comment type="pathway">
    <text evidence="1">Amino-acid biosynthesis; L-methionine biosynthesis via de novo pathway; O-acetyl-L-homoserine from L-homoserine: step 1/1.</text>
</comment>
<comment type="subunit">
    <text evidence="1">Homodimer.</text>
</comment>
<comment type="subcellular location">
    <subcellularLocation>
        <location evidence="1">Cytoplasm</location>
    </subcellularLocation>
</comment>
<comment type="similarity">
    <text evidence="1">Belongs to the AB hydrolase superfamily. MetX family.</text>
</comment>
<reference key="1">
    <citation type="journal article" date="2001" name="Science">
        <title>Comparative genomics of Listeria species.</title>
        <authorList>
            <person name="Glaser P."/>
            <person name="Frangeul L."/>
            <person name="Buchrieser C."/>
            <person name="Rusniok C."/>
            <person name="Amend A."/>
            <person name="Baquero F."/>
            <person name="Berche P."/>
            <person name="Bloecker H."/>
            <person name="Brandt P."/>
            <person name="Chakraborty T."/>
            <person name="Charbit A."/>
            <person name="Chetouani F."/>
            <person name="Couve E."/>
            <person name="de Daruvar A."/>
            <person name="Dehoux P."/>
            <person name="Domann E."/>
            <person name="Dominguez-Bernal G."/>
            <person name="Duchaud E."/>
            <person name="Durant L."/>
            <person name="Dussurget O."/>
            <person name="Entian K.-D."/>
            <person name="Fsihi H."/>
            <person name="Garcia-del Portillo F."/>
            <person name="Garrido P."/>
            <person name="Gautier L."/>
            <person name="Goebel W."/>
            <person name="Gomez-Lopez N."/>
            <person name="Hain T."/>
            <person name="Hauf J."/>
            <person name="Jackson D."/>
            <person name="Jones L.-M."/>
            <person name="Kaerst U."/>
            <person name="Kreft J."/>
            <person name="Kuhn M."/>
            <person name="Kunst F."/>
            <person name="Kurapkat G."/>
            <person name="Madueno E."/>
            <person name="Maitournam A."/>
            <person name="Mata Vicente J."/>
            <person name="Ng E."/>
            <person name="Nedjari H."/>
            <person name="Nordsiek G."/>
            <person name="Novella S."/>
            <person name="de Pablos B."/>
            <person name="Perez-Diaz J.-C."/>
            <person name="Purcell R."/>
            <person name="Remmel B."/>
            <person name="Rose M."/>
            <person name="Schlueter T."/>
            <person name="Simoes N."/>
            <person name="Tierrez A."/>
            <person name="Vazquez-Boland J.-A."/>
            <person name="Voss H."/>
            <person name="Wehland J."/>
            <person name="Cossart P."/>
        </authorList>
    </citation>
    <scope>NUCLEOTIDE SEQUENCE [LARGE SCALE GENOMIC DNA]</scope>
    <source>
        <strain>ATCC BAA-679 / EGD-e</strain>
    </source>
</reference>
<gene>
    <name evidence="1" type="primary">metXA</name>
    <name type="ordered locus">lmo0594</name>
</gene>
<feature type="chain" id="PRO_0000155726" description="Homoserine O-acetyltransferase">
    <location>
        <begin position="1"/>
        <end position="368"/>
    </location>
</feature>
<feature type="domain" description="AB hydrolase-1" evidence="1">
    <location>
        <begin position="43"/>
        <end position="346"/>
    </location>
</feature>
<feature type="active site" description="Nucleophile" evidence="1">
    <location>
        <position position="145"/>
    </location>
</feature>
<feature type="active site" evidence="1">
    <location>
        <position position="307"/>
    </location>
</feature>
<feature type="active site" evidence="1">
    <location>
        <position position="340"/>
    </location>
</feature>
<feature type="binding site" evidence="1">
    <location>
        <position position="212"/>
    </location>
    <ligand>
        <name>substrate</name>
    </ligand>
</feature>
<feature type="binding site" evidence="1">
    <location>
        <position position="341"/>
    </location>
    <ligand>
        <name>substrate</name>
    </ligand>
</feature>
<name>METXA_LISMO</name>
<evidence type="ECO:0000255" key="1">
    <source>
        <dbReference type="HAMAP-Rule" id="MF_00296"/>
    </source>
</evidence>
<accession>Q8Y9D6</accession>
<sequence length="368" mass="40950">MTLQQKELFQKSPLLLENGETLSPVLVGYETYGTLSASRDNCILLEHALTGTAHAAKHFEDDAPGWWDDYIGPGKTIDTDKYFLVCTNVFGGCSGTTGPSSINPKTGEPFRLQFPGFSIKDIIKVQRELLEQLGVTRIVSVIGGSMGGMQATEWAIDYADITDSIINIASPLAAGPDAIGYNLIMRMAILNDPDFNGGNYVGQPEGGLATARMVGMMTYRTSELFSKRFERFTVAESSPAAFSKEHFQIESYLQYQGDTFVERFDANSYLYLTKAIDLFDVTAPAKDDLPAFSKIKIPYLLIGITTDQLFRIHDLRRGYELLKEWDVPVTYHEVASEYGHDAFLVEKEVPKFEPLIRSFLSNLPVKSI</sequence>
<dbReference type="EC" id="2.3.1.31" evidence="1"/>
<dbReference type="EMBL" id="AL591975">
    <property type="protein sequence ID" value="CAC98673.1"/>
    <property type="molecule type" value="Genomic_DNA"/>
</dbReference>
<dbReference type="PIR" id="AC1149">
    <property type="entry name" value="AC1149"/>
</dbReference>
<dbReference type="SMR" id="Q8Y9D6"/>
<dbReference type="STRING" id="169963.gene:17593245"/>
<dbReference type="ESTHER" id="lismo-metx">
    <property type="family name" value="Homoserine_transacetylase"/>
</dbReference>
<dbReference type="PaxDb" id="169963-lmo0594"/>
<dbReference type="EnsemblBacteria" id="CAC98673">
    <property type="protein sequence ID" value="CAC98673"/>
    <property type="gene ID" value="CAC98673"/>
</dbReference>
<dbReference type="KEGG" id="lmo:lmo0594"/>
<dbReference type="PATRIC" id="fig|169963.11.peg.613"/>
<dbReference type="eggNOG" id="COG2021">
    <property type="taxonomic scope" value="Bacteria"/>
</dbReference>
<dbReference type="HOGENOM" id="CLU_028760_1_2_9"/>
<dbReference type="OrthoDB" id="9800754at2"/>
<dbReference type="PhylomeDB" id="Q8Y9D6"/>
<dbReference type="BioCyc" id="LMON169963:LMO0594-MONOMER"/>
<dbReference type="UniPathway" id="UPA00051">
    <property type="reaction ID" value="UER00074"/>
</dbReference>
<dbReference type="Proteomes" id="UP000000817">
    <property type="component" value="Chromosome"/>
</dbReference>
<dbReference type="GO" id="GO:0005737">
    <property type="term" value="C:cytoplasm"/>
    <property type="evidence" value="ECO:0007669"/>
    <property type="project" value="UniProtKB-SubCell"/>
</dbReference>
<dbReference type="GO" id="GO:0004414">
    <property type="term" value="F:homoserine O-acetyltransferase activity"/>
    <property type="evidence" value="ECO:0000318"/>
    <property type="project" value="GO_Central"/>
</dbReference>
<dbReference type="GO" id="GO:0009086">
    <property type="term" value="P:methionine biosynthetic process"/>
    <property type="evidence" value="ECO:0000318"/>
    <property type="project" value="GO_Central"/>
</dbReference>
<dbReference type="FunFam" id="1.10.1740.110:FF:000001">
    <property type="entry name" value="Homoserine O-acetyltransferase"/>
    <property type="match status" value="1"/>
</dbReference>
<dbReference type="Gene3D" id="1.10.1740.110">
    <property type="match status" value="1"/>
</dbReference>
<dbReference type="Gene3D" id="3.40.50.1820">
    <property type="entry name" value="alpha/beta hydrolase"/>
    <property type="match status" value="1"/>
</dbReference>
<dbReference type="HAMAP" id="MF_00296">
    <property type="entry name" value="MetX_acyltransf"/>
    <property type="match status" value="1"/>
</dbReference>
<dbReference type="InterPro" id="IPR000073">
    <property type="entry name" value="AB_hydrolase_1"/>
</dbReference>
<dbReference type="InterPro" id="IPR029058">
    <property type="entry name" value="AB_hydrolase_fold"/>
</dbReference>
<dbReference type="InterPro" id="IPR008220">
    <property type="entry name" value="HAT_MetX-like"/>
</dbReference>
<dbReference type="NCBIfam" id="TIGR01392">
    <property type="entry name" value="homoserO_Ac_trn"/>
    <property type="match status" value="1"/>
</dbReference>
<dbReference type="NCBIfam" id="NF001209">
    <property type="entry name" value="PRK00175.1"/>
    <property type="match status" value="1"/>
</dbReference>
<dbReference type="PANTHER" id="PTHR32268">
    <property type="entry name" value="HOMOSERINE O-ACETYLTRANSFERASE"/>
    <property type="match status" value="1"/>
</dbReference>
<dbReference type="PANTHER" id="PTHR32268:SF11">
    <property type="entry name" value="HOMOSERINE O-ACETYLTRANSFERASE"/>
    <property type="match status" value="1"/>
</dbReference>
<dbReference type="Pfam" id="PF00561">
    <property type="entry name" value="Abhydrolase_1"/>
    <property type="match status" value="1"/>
</dbReference>
<dbReference type="PIRSF" id="PIRSF000443">
    <property type="entry name" value="Homoser_Ac_trans"/>
    <property type="match status" value="1"/>
</dbReference>
<dbReference type="SUPFAM" id="SSF53474">
    <property type="entry name" value="alpha/beta-Hydrolases"/>
    <property type="match status" value="1"/>
</dbReference>
<proteinExistence type="inferred from homology"/>
<organism>
    <name type="scientific">Listeria monocytogenes serovar 1/2a (strain ATCC BAA-679 / EGD-e)</name>
    <dbReference type="NCBI Taxonomy" id="169963"/>
    <lineage>
        <taxon>Bacteria</taxon>
        <taxon>Bacillati</taxon>
        <taxon>Bacillota</taxon>
        <taxon>Bacilli</taxon>
        <taxon>Bacillales</taxon>
        <taxon>Listeriaceae</taxon>
        <taxon>Listeria</taxon>
    </lineage>
</organism>
<protein>
    <recommendedName>
        <fullName evidence="1">Homoserine O-acetyltransferase</fullName>
        <shortName evidence="1">HAT</shortName>
        <ecNumber evidence="1">2.3.1.31</ecNumber>
    </recommendedName>
    <alternativeName>
        <fullName evidence="1">Homoserine transacetylase</fullName>
        <shortName evidence="1">HTA</shortName>
    </alternativeName>
</protein>